<gene>
    <name type="primary">cwf26</name>
    <name type="ORF">SPCC1620.10</name>
</gene>
<accession>O94417</accession>
<organism>
    <name type="scientific">Schizosaccharomyces pombe (strain 972 / ATCC 24843)</name>
    <name type="common">Fission yeast</name>
    <dbReference type="NCBI Taxonomy" id="284812"/>
    <lineage>
        <taxon>Eukaryota</taxon>
        <taxon>Fungi</taxon>
        <taxon>Dikarya</taxon>
        <taxon>Ascomycota</taxon>
        <taxon>Taphrinomycotina</taxon>
        <taxon>Schizosaccharomycetes</taxon>
        <taxon>Schizosaccharomycetales</taxon>
        <taxon>Schizosaccharomycetaceae</taxon>
        <taxon>Schizosaccharomyces</taxon>
    </lineage>
</organism>
<feature type="chain" id="PRO_0000079607" description="Pre-mRNA-splicing factor cwf26">
    <location>
        <begin position="1"/>
        <end position="306"/>
    </location>
</feature>
<feature type="region of interest" description="Disordered" evidence="3">
    <location>
        <begin position="130"/>
        <end position="152"/>
    </location>
</feature>
<feature type="coiled-coil region" evidence="2">
    <location>
        <begin position="130"/>
        <end position="198"/>
    </location>
</feature>
<dbReference type="EMBL" id="CU329672">
    <property type="protein sequence ID" value="CAA22494.2"/>
    <property type="molecule type" value="Genomic_DNA"/>
</dbReference>
<dbReference type="PIR" id="T41040">
    <property type="entry name" value="T41040"/>
</dbReference>
<dbReference type="RefSeq" id="NP_588468.2">
    <property type="nucleotide sequence ID" value="NM_001023459.3"/>
</dbReference>
<dbReference type="SMR" id="O94417"/>
<dbReference type="BioGRID" id="275507">
    <property type="interactions" value="15"/>
</dbReference>
<dbReference type="FunCoup" id="O94417">
    <property type="interactions" value="102"/>
</dbReference>
<dbReference type="IntAct" id="O94417">
    <property type="interactions" value="6"/>
</dbReference>
<dbReference type="STRING" id="284812.O94417"/>
<dbReference type="PaxDb" id="4896-SPCC1620.10.1"/>
<dbReference type="EnsemblFungi" id="SPCC1620.10.1">
    <property type="protein sequence ID" value="SPCC1620.10.1:pep"/>
    <property type="gene ID" value="SPCC1620.10"/>
</dbReference>
<dbReference type="GeneID" id="2538931"/>
<dbReference type="KEGG" id="spo:2538931"/>
<dbReference type="PomBase" id="SPCC1620.10">
    <property type="gene designation" value="cwf26"/>
</dbReference>
<dbReference type="VEuPathDB" id="FungiDB:SPCC1620.10"/>
<dbReference type="eggNOG" id="KOG2654">
    <property type="taxonomic scope" value="Eukaryota"/>
</dbReference>
<dbReference type="HOGENOM" id="CLU_024195_0_0_1"/>
<dbReference type="InParanoid" id="O94417"/>
<dbReference type="OMA" id="NGFENRW"/>
<dbReference type="PhylomeDB" id="O94417"/>
<dbReference type="PRO" id="PR:O94417"/>
<dbReference type="Proteomes" id="UP000002485">
    <property type="component" value="Chromosome III"/>
</dbReference>
<dbReference type="GO" id="GO:0005737">
    <property type="term" value="C:cytoplasm"/>
    <property type="evidence" value="ECO:0007669"/>
    <property type="project" value="UniProtKB-SubCell"/>
</dbReference>
<dbReference type="GO" id="GO:0005634">
    <property type="term" value="C:nucleus"/>
    <property type="evidence" value="ECO:0007005"/>
    <property type="project" value="PomBase"/>
</dbReference>
<dbReference type="GO" id="GO:0000974">
    <property type="term" value="C:Prp19 complex"/>
    <property type="evidence" value="ECO:0000314"/>
    <property type="project" value="PomBase"/>
</dbReference>
<dbReference type="GO" id="GO:0005684">
    <property type="term" value="C:U2-type spliceosomal complex"/>
    <property type="evidence" value="ECO:0000314"/>
    <property type="project" value="PomBase"/>
</dbReference>
<dbReference type="GO" id="GO:0045292">
    <property type="term" value="P:mRNA cis splicing, via spliceosome"/>
    <property type="evidence" value="ECO:0000269"/>
    <property type="project" value="PomBase"/>
</dbReference>
<dbReference type="GO" id="GO:0000398">
    <property type="term" value="P:mRNA splicing, via spliceosome"/>
    <property type="evidence" value="ECO:0000318"/>
    <property type="project" value="GO_Central"/>
</dbReference>
<dbReference type="InterPro" id="IPR018609">
    <property type="entry name" value="Bud13"/>
</dbReference>
<dbReference type="InterPro" id="IPR051112">
    <property type="entry name" value="CWC26_splicing_factor"/>
</dbReference>
<dbReference type="PANTHER" id="PTHR31809">
    <property type="entry name" value="BUD13 HOMOLOG"/>
    <property type="match status" value="1"/>
</dbReference>
<dbReference type="PANTHER" id="PTHR31809:SF0">
    <property type="entry name" value="BUD13 HOMOLOG"/>
    <property type="match status" value="1"/>
</dbReference>
<dbReference type="Pfam" id="PF09736">
    <property type="entry name" value="Bud13"/>
    <property type="match status" value="1"/>
</dbReference>
<keyword id="KW-0175">Coiled coil</keyword>
<keyword id="KW-0963">Cytoplasm</keyword>
<keyword id="KW-0507">mRNA processing</keyword>
<keyword id="KW-0508">mRNA splicing</keyword>
<keyword id="KW-0539">Nucleus</keyword>
<keyword id="KW-1185">Reference proteome</keyword>
<keyword id="KW-0747">Spliceosome</keyword>
<evidence type="ECO:0000250" key="1"/>
<evidence type="ECO:0000255" key="2"/>
<evidence type="ECO:0000256" key="3">
    <source>
        <dbReference type="SAM" id="MobiDB-lite"/>
    </source>
</evidence>
<evidence type="ECO:0000269" key="4">
    <source>
    </source>
</evidence>
<evidence type="ECO:0000305" key="5"/>
<reference key="1">
    <citation type="journal article" date="2002" name="Nature">
        <title>The genome sequence of Schizosaccharomyces pombe.</title>
        <authorList>
            <person name="Wood V."/>
            <person name="Gwilliam R."/>
            <person name="Rajandream M.A."/>
            <person name="Lyne M.H."/>
            <person name="Lyne R."/>
            <person name="Stewart A."/>
            <person name="Sgouros J.G."/>
            <person name="Peat N."/>
            <person name="Hayles J."/>
            <person name="Baker S.G."/>
            <person name="Basham D."/>
            <person name="Bowman S."/>
            <person name="Brooks K."/>
            <person name="Brown D."/>
            <person name="Brown S."/>
            <person name="Chillingworth T."/>
            <person name="Churcher C.M."/>
            <person name="Collins M."/>
            <person name="Connor R."/>
            <person name="Cronin A."/>
            <person name="Davis P."/>
            <person name="Feltwell T."/>
            <person name="Fraser A."/>
            <person name="Gentles S."/>
            <person name="Goble A."/>
            <person name="Hamlin N."/>
            <person name="Harris D.E."/>
            <person name="Hidalgo J."/>
            <person name="Hodgson G."/>
            <person name="Holroyd S."/>
            <person name="Hornsby T."/>
            <person name="Howarth S."/>
            <person name="Huckle E.J."/>
            <person name="Hunt S."/>
            <person name="Jagels K."/>
            <person name="James K.D."/>
            <person name="Jones L."/>
            <person name="Jones M."/>
            <person name="Leather S."/>
            <person name="McDonald S."/>
            <person name="McLean J."/>
            <person name="Mooney P."/>
            <person name="Moule S."/>
            <person name="Mungall K.L."/>
            <person name="Murphy L.D."/>
            <person name="Niblett D."/>
            <person name="Odell C."/>
            <person name="Oliver K."/>
            <person name="O'Neil S."/>
            <person name="Pearson D."/>
            <person name="Quail M.A."/>
            <person name="Rabbinowitsch E."/>
            <person name="Rutherford K.M."/>
            <person name="Rutter S."/>
            <person name="Saunders D."/>
            <person name="Seeger K."/>
            <person name="Sharp S."/>
            <person name="Skelton J."/>
            <person name="Simmonds M.N."/>
            <person name="Squares R."/>
            <person name="Squares S."/>
            <person name="Stevens K."/>
            <person name="Taylor K."/>
            <person name="Taylor R.G."/>
            <person name="Tivey A."/>
            <person name="Walsh S.V."/>
            <person name="Warren T."/>
            <person name="Whitehead S."/>
            <person name="Woodward J.R."/>
            <person name="Volckaert G."/>
            <person name="Aert R."/>
            <person name="Robben J."/>
            <person name="Grymonprez B."/>
            <person name="Weltjens I."/>
            <person name="Vanstreels E."/>
            <person name="Rieger M."/>
            <person name="Schaefer M."/>
            <person name="Mueller-Auer S."/>
            <person name="Gabel C."/>
            <person name="Fuchs M."/>
            <person name="Duesterhoeft A."/>
            <person name="Fritzc C."/>
            <person name="Holzer E."/>
            <person name="Moestl D."/>
            <person name="Hilbert H."/>
            <person name="Borzym K."/>
            <person name="Langer I."/>
            <person name="Beck A."/>
            <person name="Lehrach H."/>
            <person name="Reinhardt R."/>
            <person name="Pohl T.M."/>
            <person name="Eger P."/>
            <person name="Zimmermann W."/>
            <person name="Wedler H."/>
            <person name="Wambutt R."/>
            <person name="Purnelle B."/>
            <person name="Goffeau A."/>
            <person name="Cadieu E."/>
            <person name="Dreano S."/>
            <person name="Gloux S."/>
            <person name="Lelaure V."/>
            <person name="Mottier S."/>
            <person name="Galibert F."/>
            <person name="Aves S.J."/>
            <person name="Xiang Z."/>
            <person name="Hunt C."/>
            <person name="Moore K."/>
            <person name="Hurst S.M."/>
            <person name="Lucas M."/>
            <person name="Rochet M."/>
            <person name="Gaillardin C."/>
            <person name="Tallada V.A."/>
            <person name="Garzon A."/>
            <person name="Thode G."/>
            <person name="Daga R.R."/>
            <person name="Cruzado L."/>
            <person name="Jimenez J."/>
            <person name="Sanchez M."/>
            <person name="del Rey F."/>
            <person name="Benito J."/>
            <person name="Dominguez A."/>
            <person name="Revuelta J.L."/>
            <person name="Moreno S."/>
            <person name="Armstrong J."/>
            <person name="Forsburg S.L."/>
            <person name="Cerutti L."/>
            <person name="Lowe T."/>
            <person name="McCombie W.R."/>
            <person name="Paulsen I."/>
            <person name="Potashkin J."/>
            <person name="Shpakovski G.V."/>
            <person name="Ussery D."/>
            <person name="Barrell B.G."/>
            <person name="Nurse P."/>
        </authorList>
    </citation>
    <scope>NUCLEOTIDE SEQUENCE [LARGE SCALE GENOMIC DNA]</scope>
    <source>
        <strain>972 / ATCC 24843</strain>
    </source>
</reference>
<reference key="2">
    <citation type="journal article" date="2002" name="Mol. Cell. Biol.">
        <title>Proteomics analysis reveals stable multiprotein complexes in both fission and budding yeasts containing Myb-related Cdc5p/Cef1p, novel pre-mRNA splicing factors, and snRNAs.</title>
        <authorList>
            <person name="Ohi M.D."/>
            <person name="Link A.J."/>
            <person name="Ren L."/>
            <person name="Jennings J.L."/>
            <person name="McDonald W.H."/>
            <person name="Gould K.L."/>
        </authorList>
    </citation>
    <scope>IDENTIFICATION IN THE CWF COMPLEX</scope>
    <scope>IDENTIFICATION BY MASS SPECTROMETRY</scope>
</reference>
<protein>
    <recommendedName>
        <fullName>Pre-mRNA-splicing factor cwf26</fullName>
    </recommendedName>
    <alternativeName>
        <fullName>Complexed with cdc5 protein 26</fullName>
    </alternativeName>
</protein>
<sequence>MHSAHMSNADYIAKKYLRKDQGKKKKKKEKDFVEIQDEDVAGWDDDNSFSLVNRELTSLHDAPTIVANESLKDRDIDAIYQNIEKTTNKPAQLWKAVGNDEVVESEQQDSHDAESIPQFGLLTGKQVTFKAEERRKREEKSSNLDEEELRKSRETVYRDATGRRIDLVLARKEAKRKLKEKEEEARRQKEQQQGVVQVRQQKEYLKELERQKTVPLARYEDDPEYNKELKERSRWNDPAASFLTNKPVSSKATYQGYAPPNRFNIRPGHRWDGIIRGNGFENKWFQRQNERKAQEHEAHMWAIEDM</sequence>
<name>CWC26_SCHPO</name>
<comment type="function">
    <text evidence="1">Involved in mRNA splicing.</text>
</comment>
<comment type="subunit">
    <text evidence="4">Belongs to the 40S cdc5-associated complex (or cwf complex), a spliceosome sub-complex reminiscent of a late-stage spliceosome composed of the U2, U5 and U6 snRNAs and at least brr2, cdc5, cwf2/prp3, cwf3/syf1, cwf4/syf3, cwf5/ecm2, spp42/cwf6, cwf7/spf27, cwf8, cwf9, cwf10, cwf11, cwf12, prp45/cwf13, cwf14, cwf15, cwf16, cwf17, cwf18, cwf19, cwf20, cwf21, cwf22, cwf23, cwf24, cwf25, cwf26, cyp7/cwf27, cwf28, cwf29/ist3, lea1, msl1, prp5/cwf1, prp10, prp12/sap130, prp17, prp22, sap61, sap62, sap114, sap145, slu7, smb1, smd1, smd3, smf1, smg1 and syf2.</text>
</comment>
<comment type="subcellular location">
    <subcellularLocation>
        <location evidence="1">Cytoplasm</location>
    </subcellularLocation>
    <subcellularLocation>
        <location evidence="1">Nucleus</location>
    </subcellularLocation>
</comment>
<comment type="similarity">
    <text evidence="5">Belongs to the CWC26 family.</text>
</comment>
<proteinExistence type="evidence at protein level"/>